<gene>
    <name evidence="1" type="primary">fmt</name>
    <name type="ordered locus">VCM66_0045</name>
</gene>
<organism>
    <name type="scientific">Vibrio cholerae serotype O1 (strain M66-2)</name>
    <dbReference type="NCBI Taxonomy" id="579112"/>
    <lineage>
        <taxon>Bacteria</taxon>
        <taxon>Pseudomonadati</taxon>
        <taxon>Pseudomonadota</taxon>
        <taxon>Gammaproteobacteria</taxon>
        <taxon>Vibrionales</taxon>
        <taxon>Vibrionaceae</taxon>
        <taxon>Vibrio</taxon>
    </lineage>
</organism>
<feature type="chain" id="PRO_1000190050" description="Methionyl-tRNA formyltransferase">
    <location>
        <begin position="1"/>
        <end position="315"/>
    </location>
</feature>
<feature type="binding site" evidence="1">
    <location>
        <begin position="113"/>
        <end position="116"/>
    </location>
    <ligand>
        <name>(6S)-5,6,7,8-tetrahydrofolate</name>
        <dbReference type="ChEBI" id="CHEBI:57453"/>
    </ligand>
</feature>
<protein>
    <recommendedName>
        <fullName evidence="1">Methionyl-tRNA formyltransferase</fullName>
        <ecNumber evidence="1">2.1.2.9</ecNumber>
    </recommendedName>
</protein>
<dbReference type="EC" id="2.1.2.9" evidence="1"/>
<dbReference type="EMBL" id="CP001233">
    <property type="protein sequence ID" value="ACP04382.1"/>
    <property type="molecule type" value="Genomic_DNA"/>
</dbReference>
<dbReference type="RefSeq" id="WP_000083539.1">
    <property type="nucleotide sequence ID" value="NC_012578.1"/>
</dbReference>
<dbReference type="SMR" id="C3LPB8"/>
<dbReference type="KEGG" id="vcm:VCM66_0045"/>
<dbReference type="HOGENOM" id="CLU_033347_1_2_6"/>
<dbReference type="Proteomes" id="UP000001217">
    <property type="component" value="Chromosome I"/>
</dbReference>
<dbReference type="GO" id="GO:0005829">
    <property type="term" value="C:cytosol"/>
    <property type="evidence" value="ECO:0007669"/>
    <property type="project" value="TreeGrafter"/>
</dbReference>
<dbReference type="GO" id="GO:0004479">
    <property type="term" value="F:methionyl-tRNA formyltransferase activity"/>
    <property type="evidence" value="ECO:0007669"/>
    <property type="project" value="UniProtKB-UniRule"/>
</dbReference>
<dbReference type="CDD" id="cd08646">
    <property type="entry name" value="FMT_core_Met-tRNA-FMT_N"/>
    <property type="match status" value="1"/>
</dbReference>
<dbReference type="CDD" id="cd08704">
    <property type="entry name" value="Met_tRNA_FMT_C"/>
    <property type="match status" value="1"/>
</dbReference>
<dbReference type="FunFam" id="3.10.25.10:FF:000012">
    <property type="entry name" value="Methionyl-tRNA formyltransferase"/>
    <property type="match status" value="1"/>
</dbReference>
<dbReference type="FunFam" id="3.40.50.12230:FF:000001">
    <property type="entry name" value="Methionyl-tRNA formyltransferase"/>
    <property type="match status" value="1"/>
</dbReference>
<dbReference type="FunFam" id="3.40.50.170:FF:000003">
    <property type="entry name" value="Methionyl-tRNA formyltransferase"/>
    <property type="match status" value="1"/>
</dbReference>
<dbReference type="Gene3D" id="3.10.25.10">
    <property type="entry name" value="Formyl transferase, C-terminal domain"/>
    <property type="match status" value="1"/>
</dbReference>
<dbReference type="Gene3D" id="3.40.50.170">
    <property type="entry name" value="Formyl transferase, N-terminal domain"/>
    <property type="match status" value="1"/>
</dbReference>
<dbReference type="HAMAP" id="MF_00182">
    <property type="entry name" value="Formyl_trans"/>
    <property type="match status" value="1"/>
</dbReference>
<dbReference type="InterPro" id="IPR005794">
    <property type="entry name" value="Fmt"/>
</dbReference>
<dbReference type="InterPro" id="IPR005793">
    <property type="entry name" value="Formyl_trans_C"/>
</dbReference>
<dbReference type="InterPro" id="IPR037022">
    <property type="entry name" value="Formyl_trans_C_sf"/>
</dbReference>
<dbReference type="InterPro" id="IPR002376">
    <property type="entry name" value="Formyl_transf_N"/>
</dbReference>
<dbReference type="InterPro" id="IPR036477">
    <property type="entry name" value="Formyl_transf_N_sf"/>
</dbReference>
<dbReference type="InterPro" id="IPR011034">
    <property type="entry name" value="Formyl_transferase-like_C_sf"/>
</dbReference>
<dbReference type="InterPro" id="IPR001555">
    <property type="entry name" value="GART_AS"/>
</dbReference>
<dbReference type="InterPro" id="IPR044135">
    <property type="entry name" value="Met-tRNA-FMT_C"/>
</dbReference>
<dbReference type="InterPro" id="IPR041711">
    <property type="entry name" value="Met-tRNA-FMT_N"/>
</dbReference>
<dbReference type="NCBIfam" id="TIGR00460">
    <property type="entry name" value="fmt"/>
    <property type="match status" value="1"/>
</dbReference>
<dbReference type="PANTHER" id="PTHR11138">
    <property type="entry name" value="METHIONYL-TRNA FORMYLTRANSFERASE"/>
    <property type="match status" value="1"/>
</dbReference>
<dbReference type="PANTHER" id="PTHR11138:SF5">
    <property type="entry name" value="METHIONYL-TRNA FORMYLTRANSFERASE, MITOCHONDRIAL"/>
    <property type="match status" value="1"/>
</dbReference>
<dbReference type="Pfam" id="PF02911">
    <property type="entry name" value="Formyl_trans_C"/>
    <property type="match status" value="1"/>
</dbReference>
<dbReference type="Pfam" id="PF00551">
    <property type="entry name" value="Formyl_trans_N"/>
    <property type="match status" value="1"/>
</dbReference>
<dbReference type="SUPFAM" id="SSF50486">
    <property type="entry name" value="FMT C-terminal domain-like"/>
    <property type="match status" value="1"/>
</dbReference>
<dbReference type="SUPFAM" id="SSF53328">
    <property type="entry name" value="Formyltransferase"/>
    <property type="match status" value="1"/>
</dbReference>
<dbReference type="PROSITE" id="PS00373">
    <property type="entry name" value="GART"/>
    <property type="match status" value="1"/>
</dbReference>
<proteinExistence type="inferred from homology"/>
<sequence length="315" mass="34269">MSQSLRIVFAGTPDFAARHLAALLSSEHEIIAVYTQPDRPAGRGKKLTASPVKTLALEHNVPVYQPENFKSDESKQQLAALNADLMVVVAYGLLLPKVVLDTPKLGCINVHGSILPRWRGAAPIQRSIWAGDSETGVTIMQMDVGLDTGDMLKIATLPIEASDTSASMYDKLAELGPQALLECLQEIAQGTAVAVKQDDALANYAHKLSKEEARINWNDEAAHIERCIRAFNPWPMSHFEVAENSIKVWQARVETRAVTQTPGTIIQADKSGIYVATGQDVLVLESLQIPGKKALPVQDILNARADWFSVGSQLS</sequence>
<name>FMT_VIBCM</name>
<evidence type="ECO:0000255" key="1">
    <source>
        <dbReference type="HAMAP-Rule" id="MF_00182"/>
    </source>
</evidence>
<keyword id="KW-0648">Protein biosynthesis</keyword>
<keyword id="KW-0808">Transferase</keyword>
<comment type="function">
    <text evidence="1">Attaches a formyl group to the free amino group of methionyl-tRNA(fMet). The formyl group appears to play a dual role in the initiator identity of N-formylmethionyl-tRNA by promoting its recognition by IF2 and preventing the misappropriation of this tRNA by the elongation apparatus.</text>
</comment>
<comment type="catalytic activity">
    <reaction evidence="1">
        <text>L-methionyl-tRNA(fMet) + (6R)-10-formyltetrahydrofolate = N-formyl-L-methionyl-tRNA(fMet) + (6S)-5,6,7,8-tetrahydrofolate + H(+)</text>
        <dbReference type="Rhea" id="RHEA:24380"/>
        <dbReference type="Rhea" id="RHEA-COMP:9952"/>
        <dbReference type="Rhea" id="RHEA-COMP:9953"/>
        <dbReference type="ChEBI" id="CHEBI:15378"/>
        <dbReference type="ChEBI" id="CHEBI:57453"/>
        <dbReference type="ChEBI" id="CHEBI:78530"/>
        <dbReference type="ChEBI" id="CHEBI:78844"/>
        <dbReference type="ChEBI" id="CHEBI:195366"/>
        <dbReference type="EC" id="2.1.2.9"/>
    </reaction>
</comment>
<comment type="similarity">
    <text evidence="1">Belongs to the Fmt family.</text>
</comment>
<reference key="1">
    <citation type="journal article" date="2008" name="PLoS ONE">
        <title>A recalibrated molecular clock and independent origins for the cholera pandemic clones.</title>
        <authorList>
            <person name="Feng L."/>
            <person name="Reeves P.R."/>
            <person name="Lan R."/>
            <person name="Ren Y."/>
            <person name="Gao C."/>
            <person name="Zhou Z."/>
            <person name="Ren Y."/>
            <person name="Cheng J."/>
            <person name="Wang W."/>
            <person name="Wang J."/>
            <person name="Qian W."/>
            <person name="Li D."/>
            <person name="Wang L."/>
        </authorList>
    </citation>
    <scope>NUCLEOTIDE SEQUENCE [LARGE SCALE GENOMIC DNA]</scope>
    <source>
        <strain>M66-2</strain>
    </source>
</reference>
<accession>C3LPB8</accession>